<protein>
    <recommendedName>
        <fullName evidence="1">4-hydroxy-tetrahydrodipicolinate reductase</fullName>
        <shortName evidence="1">HTPA reductase</shortName>
        <ecNumber evidence="1">1.17.1.8</ecNumber>
    </recommendedName>
</protein>
<organism>
    <name type="scientific">Streptococcus uberis (strain ATCC BAA-854 / 0140J)</name>
    <dbReference type="NCBI Taxonomy" id="218495"/>
    <lineage>
        <taxon>Bacteria</taxon>
        <taxon>Bacillati</taxon>
        <taxon>Bacillota</taxon>
        <taxon>Bacilli</taxon>
        <taxon>Lactobacillales</taxon>
        <taxon>Streptococcaceae</taxon>
        <taxon>Streptococcus</taxon>
    </lineage>
</organism>
<evidence type="ECO:0000255" key="1">
    <source>
        <dbReference type="HAMAP-Rule" id="MF_00102"/>
    </source>
</evidence>
<evidence type="ECO:0000305" key="2"/>
<keyword id="KW-0028">Amino-acid biosynthesis</keyword>
<keyword id="KW-0963">Cytoplasm</keyword>
<keyword id="KW-0220">Diaminopimelate biosynthesis</keyword>
<keyword id="KW-0457">Lysine biosynthesis</keyword>
<keyword id="KW-0520">NAD</keyword>
<keyword id="KW-0521">NADP</keyword>
<keyword id="KW-0560">Oxidoreductase</keyword>
<keyword id="KW-1185">Reference proteome</keyword>
<feature type="chain" id="PRO_1000189761" description="4-hydroxy-tetrahydrodipicolinate reductase">
    <location>
        <begin position="1"/>
        <end position="255"/>
    </location>
</feature>
<feature type="active site" description="Proton donor/acceptor" evidence="1">
    <location>
        <position position="145"/>
    </location>
</feature>
<feature type="active site" description="Proton donor" evidence="1">
    <location>
        <position position="149"/>
    </location>
</feature>
<feature type="binding site" evidence="1">
    <location>
        <begin position="9"/>
        <end position="14"/>
    </location>
    <ligand>
        <name>NAD(+)</name>
        <dbReference type="ChEBI" id="CHEBI:57540"/>
    </ligand>
</feature>
<feature type="binding site" evidence="1">
    <location>
        <begin position="89"/>
        <end position="91"/>
    </location>
    <ligand>
        <name>NAD(+)</name>
        <dbReference type="ChEBI" id="CHEBI:57540"/>
    </ligand>
</feature>
<feature type="binding site" evidence="1">
    <location>
        <begin position="115"/>
        <end position="118"/>
    </location>
    <ligand>
        <name>NAD(+)</name>
        <dbReference type="ChEBI" id="CHEBI:57540"/>
    </ligand>
</feature>
<feature type="binding site" evidence="1">
    <location>
        <position position="146"/>
    </location>
    <ligand>
        <name>(S)-2,3,4,5-tetrahydrodipicolinate</name>
        <dbReference type="ChEBI" id="CHEBI:16845"/>
    </ligand>
</feature>
<feature type="binding site" evidence="1">
    <location>
        <begin position="155"/>
        <end position="156"/>
    </location>
    <ligand>
        <name>(S)-2,3,4,5-tetrahydrodipicolinate</name>
        <dbReference type="ChEBI" id="CHEBI:16845"/>
    </ligand>
</feature>
<dbReference type="EC" id="1.17.1.8" evidence="1"/>
<dbReference type="EMBL" id="AM946015">
    <property type="protein sequence ID" value="CAR41699.1"/>
    <property type="molecule type" value="Genomic_DNA"/>
</dbReference>
<dbReference type="RefSeq" id="WP_012658273.1">
    <property type="nucleotide sequence ID" value="NC_012004.1"/>
</dbReference>
<dbReference type="SMR" id="B9DRX8"/>
<dbReference type="STRING" id="218495.SUB0756"/>
<dbReference type="GeneID" id="93826040"/>
<dbReference type="KEGG" id="sub:SUB0756"/>
<dbReference type="eggNOG" id="COG0289">
    <property type="taxonomic scope" value="Bacteria"/>
</dbReference>
<dbReference type="HOGENOM" id="CLU_047479_0_1_9"/>
<dbReference type="OrthoDB" id="9790352at2"/>
<dbReference type="UniPathway" id="UPA00034">
    <property type="reaction ID" value="UER00018"/>
</dbReference>
<dbReference type="Proteomes" id="UP000000449">
    <property type="component" value="Chromosome"/>
</dbReference>
<dbReference type="GO" id="GO:0005829">
    <property type="term" value="C:cytosol"/>
    <property type="evidence" value="ECO:0007669"/>
    <property type="project" value="TreeGrafter"/>
</dbReference>
<dbReference type="GO" id="GO:0008839">
    <property type="term" value="F:4-hydroxy-tetrahydrodipicolinate reductase"/>
    <property type="evidence" value="ECO:0007669"/>
    <property type="project" value="UniProtKB-EC"/>
</dbReference>
<dbReference type="GO" id="GO:0051287">
    <property type="term" value="F:NAD binding"/>
    <property type="evidence" value="ECO:0007669"/>
    <property type="project" value="UniProtKB-UniRule"/>
</dbReference>
<dbReference type="GO" id="GO:0050661">
    <property type="term" value="F:NADP binding"/>
    <property type="evidence" value="ECO:0007669"/>
    <property type="project" value="UniProtKB-UniRule"/>
</dbReference>
<dbReference type="GO" id="GO:0016726">
    <property type="term" value="F:oxidoreductase activity, acting on CH or CH2 groups, NAD or NADP as acceptor"/>
    <property type="evidence" value="ECO:0007669"/>
    <property type="project" value="UniProtKB-UniRule"/>
</dbReference>
<dbReference type="GO" id="GO:0019877">
    <property type="term" value="P:diaminopimelate biosynthetic process"/>
    <property type="evidence" value="ECO:0007669"/>
    <property type="project" value="UniProtKB-UniRule"/>
</dbReference>
<dbReference type="GO" id="GO:0009089">
    <property type="term" value="P:lysine biosynthetic process via diaminopimelate"/>
    <property type="evidence" value="ECO:0007669"/>
    <property type="project" value="UniProtKB-UniRule"/>
</dbReference>
<dbReference type="CDD" id="cd02274">
    <property type="entry name" value="DHDPR_N"/>
    <property type="match status" value="1"/>
</dbReference>
<dbReference type="FunFam" id="3.30.360.10:FF:000009">
    <property type="entry name" value="4-hydroxy-tetrahydrodipicolinate reductase"/>
    <property type="match status" value="1"/>
</dbReference>
<dbReference type="Gene3D" id="3.30.360.10">
    <property type="entry name" value="Dihydrodipicolinate Reductase, domain 2"/>
    <property type="match status" value="1"/>
</dbReference>
<dbReference type="Gene3D" id="3.40.50.720">
    <property type="entry name" value="NAD(P)-binding Rossmann-like Domain"/>
    <property type="match status" value="1"/>
</dbReference>
<dbReference type="HAMAP" id="MF_00102">
    <property type="entry name" value="DapB"/>
    <property type="match status" value="1"/>
</dbReference>
<dbReference type="InterPro" id="IPR022663">
    <property type="entry name" value="DapB_C"/>
</dbReference>
<dbReference type="InterPro" id="IPR000846">
    <property type="entry name" value="DapB_N"/>
</dbReference>
<dbReference type="InterPro" id="IPR022664">
    <property type="entry name" value="DapB_N_CS"/>
</dbReference>
<dbReference type="InterPro" id="IPR023940">
    <property type="entry name" value="DHDPR_bac"/>
</dbReference>
<dbReference type="InterPro" id="IPR036291">
    <property type="entry name" value="NAD(P)-bd_dom_sf"/>
</dbReference>
<dbReference type="NCBIfam" id="TIGR00036">
    <property type="entry name" value="dapB"/>
    <property type="match status" value="1"/>
</dbReference>
<dbReference type="PANTHER" id="PTHR20836:SF0">
    <property type="entry name" value="4-HYDROXY-TETRAHYDRODIPICOLINATE REDUCTASE 1, CHLOROPLASTIC-RELATED"/>
    <property type="match status" value="1"/>
</dbReference>
<dbReference type="PANTHER" id="PTHR20836">
    <property type="entry name" value="DIHYDRODIPICOLINATE REDUCTASE"/>
    <property type="match status" value="1"/>
</dbReference>
<dbReference type="Pfam" id="PF05173">
    <property type="entry name" value="DapB_C"/>
    <property type="match status" value="1"/>
</dbReference>
<dbReference type="Pfam" id="PF01113">
    <property type="entry name" value="DapB_N"/>
    <property type="match status" value="1"/>
</dbReference>
<dbReference type="PIRSF" id="PIRSF000161">
    <property type="entry name" value="DHPR"/>
    <property type="match status" value="1"/>
</dbReference>
<dbReference type="SUPFAM" id="SSF55347">
    <property type="entry name" value="Glyceraldehyde-3-phosphate dehydrogenase-like, C-terminal domain"/>
    <property type="match status" value="1"/>
</dbReference>
<dbReference type="SUPFAM" id="SSF51735">
    <property type="entry name" value="NAD(P)-binding Rossmann-fold domains"/>
    <property type="match status" value="1"/>
</dbReference>
<dbReference type="PROSITE" id="PS01298">
    <property type="entry name" value="DAPB"/>
    <property type="match status" value="1"/>
</dbReference>
<comment type="function">
    <text evidence="1">Catalyzes the conversion of 4-hydroxy-tetrahydrodipicolinate (HTPA) to tetrahydrodipicolinate.</text>
</comment>
<comment type="catalytic activity">
    <reaction evidence="1">
        <text>(S)-2,3,4,5-tetrahydrodipicolinate + NAD(+) + H2O = (2S,4S)-4-hydroxy-2,3,4,5-tetrahydrodipicolinate + NADH + H(+)</text>
        <dbReference type="Rhea" id="RHEA:35323"/>
        <dbReference type="ChEBI" id="CHEBI:15377"/>
        <dbReference type="ChEBI" id="CHEBI:15378"/>
        <dbReference type="ChEBI" id="CHEBI:16845"/>
        <dbReference type="ChEBI" id="CHEBI:57540"/>
        <dbReference type="ChEBI" id="CHEBI:57945"/>
        <dbReference type="ChEBI" id="CHEBI:67139"/>
        <dbReference type="EC" id="1.17.1.8"/>
    </reaction>
</comment>
<comment type="catalytic activity">
    <reaction evidence="1">
        <text>(S)-2,3,4,5-tetrahydrodipicolinate + NADP(+) + H2O = (2S,4S)-4-hydroxy-2,3,4,5-tetrahydrodipicolinate + NADPH + H(+)</text>
        <dbReference type="Rhea" id="RHEA:35331"/>
        <dbReference type="ChEBI" id="CHEBI:15377"/>
        <dbReference type="ChEBI" id="CHEBI:15378"/>
        <dbReference type="ChEBI" id="CHEBI:16845"/>
        <dbReference type="ChEBI" id="CHEBI:57783"/>
        <dbReference type="ChEBI" id="CHEBI:58349"/>
        <dbReference type="ChEBI" id="CHEBI:67139"/>
        <dbReference type="EC" id="1.17.1.8"/>
    </reaction>
</comment>
<comment type="pathway">
    <text evidence="1">Amino-acid biosynthesis; L-lysine biosynthesis via DAP pathway; (S)-tetrahydrodipicolinate from L-aspartate: step 4/4.</text>
</comment>
<comment type="subcellular location">
    <subcellularLocation>
        <location evidence="1">Cytoplasm</location>
    </subcellularLocation>
</comment>
<comment type="similarity">
    <text evidence="1">Belongs to the DapB family.</text>
</comment>
<comment type="caution">
    <text evidence="2">Was originally thought to be a dihydrodipicolinate reductase (DHDPR), catalyzing the conversion of dihydrodipicolinate to tetrahydrodipicolinate. However, it was shown in E.coli that the substrate of the enzymatic reaction is not dihydrodipicolinate (DHDP) but in fact (2S,4S)-4-hydroxy-2,3,4,5-tetrahydrodipicolinic acid (HTPA), the product released by the DapA-catalyzed reaction.</text>
</comment>
<reference key="1">
    <citation type="journal article" date="2009" name="BMC Genomics">
        <title>Evidence for niche adaptation in the genome of the bovine pathogen Streptococcus uberis.</title>
        <authorList>
            <person name="Ward P.N."/>
            <person name="Holden M.T.G."/>
            <person name="Leigh J.A."/>
            <person name="Lennard N."/>
            <person name="Bignell A."/>
            <person name="Barron A."/>
            <person name="Clark L."/>
            <person name="Quail M.A."/>
            <person name="Woodward J."/>
            <person name="Barrell B.G."/>
            <person name="Egan S.A."/>
            <person name="Field T.R."/>
            <person name="Maskell D."/>
            <person name="Kehoe M."/>
            <person name="Dowson C.G."/>
            <person name="Chanter N."/>
            <person name="Whatmore A.M."/>
            <person name="Bentley S.D."/>
            <person name="Parkhill J."/>
        </authorList>
    </citation>
    <scope>NUCLEOTIDE SEQUENCE [LARGE SCALE GENOMIC DNA]</scope>
    <source>
        <strain>ATCC BAA-854 / 0140J</strain>
    </source>
</reference>
<accession>B9DRX8</accession>
<gene>
    <name evidence="1" type="primary">dapB</name>
    <name type="ordered locus">SUB0756</name>
</gene>
<proteinExistence type="inferred from homology"/>
<sequence length="255" mass="28165">MGIRIIIAGYRGKMGSTALSMAQNEEDFEVVALLDPNAKEKEFQGIPVYNLKEDLKTIDAEVWVDFTHPEVAFENTHFAIEQGFAPVVGTTGFTSKEIENLIQLSSDKNIGGLIAPNFAIGALLLMEFAERAAKYFPNVEIIELHHDQKKDAPSGTALKTAEVISKERQEITQGHPDEVESLPGARGANYQGMHIHSVRLPGLVAHQEVLFGGPGEGLTLRHDSYDRQSFMQGVKIGIREVVKRNQLVYGLEKLL</sequence>
<name>DAPB_STRU0</name>